<keyword id="KW-1003">Cell membrane</keyword>
<keyword id="KW-0449">Lipoprotein</keyword>
<keyword id="KW-0472">Membrane</keyword>
<keyword id="KW-0564">Palmitate</keyword>
<keyword id="KW-1185">Reference proteome</keyword>
<keyword id="KW-0732">Signal</keyword>
<sequence length="224" mass="24415">MKRTSRSLTAALLGIAALLAGCIKPNTFDPYANPGRGELDRRQKIVNGRPDLETVQQQLANLDATIRAMIAKYSPQTRFSTGVTVSHLTNGCNDPFTRTIGRQEASELFFGRPAPTPQQWLQIVTELAPVFKAAGFRPNNSVPGDPPQPLGAPNYSQIRDDGVTINLVNGDNRGPLGYSYNTGCHLPAAWRTAPPPLNMRPANDPDVHYPYLYGSPGGRTRDAY</sequence>
<organism>
    <name type="scientific">Mycobacterium bovis (strain ATCC BAA-935 / AF2122/97)</name>
    <dbReference type="NCBI Taxonomy" id="233413"/>
    <lineage>
        <taxon>Bacteria</taxon>
        <taxon>Bacillati</taxon>
        <taxon>Actinomycetota</taxon>
        <taxon>Actinomycetes</taxon>
        <taxon>Mycobacteriales</taxon>
        <taxon>Mycobacteriaceae</taxon>
        <taxon>Mycobacterium</taxon>
        <taxon>Mycobacterium tuberculosis complex</taxon>
    </lineage>
</organism>
<gene>
    <name type="primary">lprP</name>
    <name type="ordered locus">BQ2027_MB0987C</name>
</gene>
<dbReference type="EMBL" id="LT708304">
    <property type="protein sequence ID" value="SIT99586.1"/>
    <property type="molecule type" value="Genomic_DNA"/>
</dbReference>
<dbReference type="RefSeq" id="NP_854644.1">
    <property type="nucleotide sequence ID" value="NC_002945.3"/>
</dbReference>
<dbReference type="RefSeq" id="WP_003898662.1">
    <property type="nucleotide sequence ID" value="NC_002945.4"/>
</dbReference>
<dbReference type="KEGG" id="mbo:BQ2027_MB0987C"/>
<dbReference type="PATRIC" id="fig|233413.5.peg.1075"/>
<dbReference type="Proteomes" id="UP000001419">
    <property type="component" value="Chromosome"/>
</dbReference>
<dbReference type="GO" id="GO:0005886">
    <property type="term" value="C:plasma membrane"/>
    <property type="evidence" value="ECO:0007669"/>
    <property type="project" value="UniProtKB-SubCell"/>
</dbReference>
<dbReference type="Gene3D" id="3.30.2030.20">
    <property type="match status" value="1"/>
</dbReference>
<dbReference type="InterPro" id="IPR032018">
    <property type="entry name" value="LppA/LppB/LprP"/>
</dbReference>
<dbReference type="Pfam" id="PF16708">
    <property type="entry name" value="LppA"/>
    <property type="match status" value="1"/>
</dbReference>
<dbReference type="PROSITE" id="PS51257">
    <property type="entry name" value="PROKAR_LIPOPROTEIN"/>
    <property type="match status" value="1"/>
</dbReference>
<evidence type="ECO:0000255" key="1">
    <source>
        <dbReference type="PROSITE-ProRule" id="PRU00303"/>
    </source>
</evidence>
<evidence type="ECO:0000305" key="2"/>
<name>LPRP_MYCBO</name>
<reference key="1">
    <citation type="journal article" date="2003" name="Proc. Natl. Acad. Sci. U.S.A.">
        <title>The complete genome sequence of Mycobacterium bovis.</title>
        <authorList>
            <person name="Garnier T."/>
            <person name="Eiglmeier K."/>
            <person name="Camus J.-C."/>
            <person name="Medina N."/>
            <person name="Mansoor H."/>
            <person name="Pryor M."/>
            <person name="Duthoy S."/>
            <person name="Grondin S."/>
            <person name="Lacroix C."/>
            <person name="Monsempe C."/>
            <person name="Simon S."/>
            <person name="Harris B."/>
            <person name="Atkin R."/>
            <person name="Doggett J."/>
            <person name="Mayes R."/>
            <person name="Keating L."/>
            <person name="Wheeler P.R."/>
            <person name="Parkhill J."/>
            <person name="Barrell B.G."/>
            <person name="Cole S.T."/>
            <person name="Gordon S.V."/>
            <person name="Hewinson R.G."/>
        </authorList>
    </citation>
    <scope>NUCLEOTIDE SEQUENCE [LARGE SCALE GENOMIC DNA]</scope>
    <source>
        <strain>ATCC BAA-935 / AF2122/97</strain>
    </source>
</reference>
<reference key="2">
    <citation type="journal article" date="2017" name="Genome Announc.">
        <title>Updated reference genome sequence and annotation of Mycobacterium bovis AF2122/97.</title>
        <authorList>
            <person name="Malone K.M."/>
            <person name="Farrell D."/>
            <person name="Stuber T.P."/>
            <person name="Schubert O.T."/>
            <person name="Aebersold R."/>
            <person name="Robbe-Austerman S."/>
            <person name="Gordon S.V."/>
        </authorList>
    </citation>
    <scope>NUCLEOTIDE SEQUENCE [LARGE SCALE GENOMIC DNA]</scope>
    <scope>GENOME REANNOTATION</scope>
    <source>
        <strain>ATCC BAA-935 / AF2122/97</strain>
    </source>
</reference>
<proteinExistence type="inferred from homology"/>
<feature type="signal peptide" evidence="1">
    <location>
        <begin position="1"/>
        <end position="21"/>
    </location>
</feature>
<feature type="chain" id="PRO_0000018151" description="Uncharacterized lipoprotein LprP">
    <location>
        <begin position="22"/>
        <end position="224"/>
    </location>
</feature>
<feature type="lipid moiety-binding region" description="N-palmitoyl cysteine" evidence="2">
    <location>
        <position position="22"/>
    </location>
</feature>
<feature type="lipid moiety-binding region" description="S-diacylglycerol cysteine" evidence="2">
    <location>
        <position position="22"/>
    </location>
</feature>
<accession>P59987</accession>
<accession>A0A1R3XWY1</accession>
<accession>X2BGC0</accession>
<comment type="subcellular location">
    <subcellularLocation>
        <location evidence="2">Cell membrane</location>
        <topology evidence="2">Lipid-anchor</topology>
    </subcellularLocation>
</comment>
<comment type="similarity">
    <text evidence="2">To M.tuberculosis LprP.</text>
</comment>
<protein>
    <recommendedName>
        <fullName>Uncharacterized lipoprotein LprP</fullName>
    </recommendedName>
</protein>